<accession>Q0TAC8</accession>
<reference key="1">
    <citation type="journal article" date="2006" name="Mol. Microbiol.">
        <title>Role of pathogenicity island-associated integrases in the genome plasticity of uropathogenic Escherichia coli strain 536.</title>
        <authorList>
            <person name="Hochhut B."/>
            <person name="Wilde C."/>
            <person name="Balling G."/>
            <person name="Middendorf B."/>
            <person name="Dobrindt U."/>
            <person name="Brzuszkiewicz E."/>
            <person name="Gottschalk G."/>
            <person name="Carniel E."/>
            <person name="Hacker J."/>
        </authorList>
    </citation>
    <scope>NUCLEOTIDE SEQUENCE [LARGE SCALE GENOMIC DNA]</scope>
    <source>
        <strain>536 / UPEC</strain>
    </source>
</reference>
<evidence type="ECO:0000255" key="1">
    <source>
        <dbReference type="HAMAP-Rule" id="MF_00501"/>
    </source>
</evidence>
<evidence type="ECO:0000305" key="2"/>
<sequence>MKKDIHPKYEEITASCSCGNVMKIRSTVGHDLNLDVCSKCHPFFTGKQRDVATGGRVDRFNKRFNIPGSK</sequence>
<feature type="chain" id="PRO_0000259186" description="Large ribosomal subunit protein bL31">
    <location>
        <begin position="1"/>
        <end position="70"/>
    </location>
</feature>
<feature type="binding site" evidence="1">
    <location>
        <position position="16"/>
    </location>
    <ligand>
        <name>Zn(2+)</name>
        <dbReference type="ChEBI" id="CHEBI:29105"/>
    </ligand>
</feature>
<feature type="binding site" evidence="1">
    <location>
        <position position="18"/>
    </location>
    <ligand>
        <name>Zn(2+)</name>
        <dbReference type="ChEBI" id="CHEBI:29105"/>
    </ligand>
</feature>
<feature type="binding site" evidence="1">
    <location>
        <position position="37"/>
    </location>
    <ligand>
        <name>Zn(2+)</name>
        <dbReference type="ChEBI" id="CHEBI:29105"/>
    </ligand>
</feature>
<feature type="binding site" evidence="1">
    <location>
        <position position="40"/>
    </location>
    <ligand>
        <name>Zn(2+)</name>
        <dbReference type="ChEBI" id="CHEBI:29105"/>
    </ligand>
</feature>
<feature type="modified residue" description="N6-acetyllysine" evidence="1">
    <location>
        <position position="8"/>
    </location>
</feature>
<protein>
    <recommendedName>
        <fullName evidence="1">Large ribosomal subunit protein bL31</fullName>
    </recommendedName>
    <alternativeName>
        <fullName evidence="2">50S ribosomal protein L31</fullName>
    </alternativeName>
</protein>
<gene>
    <name evidence="1" type="primary">rpmE</name>
    <name type="ordered locus">ECP_4145</name>
</gene>
<organism>
    <name type="scientific">Escherichia coli O6:K15:H31 (strain 536 / UPEC)</name>
    <dbReference type="NCBI Taxonomy" id="362663"/>
    <lineage>
        <taxon>Bacteria</taxon>
        <taxon>Pseudomonadati</taxon>
        <taxon>Pseudomonadota</taxon>
        <taxon>Gammaproteobacteria</taxon>
        <taxon>Enterobacterales</taxon>
        <taxon>Enterobacteriaceae</taxon>
        <taxon>Escherichia</taxon>
    </lineage>
</organism>
<keyword id="KW-0007">Acetylation</keyword>
<keyword id="KW-0479">Metal-binding</keyword>
<keyword id="KW-0687">Ribonucleoprotein</keyword>
<keyword id="KW-0689">Ribosomal protein</keyword>
<keyword id="KW-0694">RNA-binding</keyword>
<keyword id="KW-0699">rRNA-binding</keyword>
<keyword id="KW-0862">Zinc</keyword>
<name>RL31_ECOL5</name>
<dbReference type="EMBL" id="CP000247">
    <property type="protein sequence ID" value="ABG72101.1"/>
    <property type="molecule type" value="Genomic_DNA"/>
</dbReference>
<dbReference type="RefSeq" id="WP_000710769.1">
    <property type="nucleotide sequence ID" value="NC_008253.1"/>
</dbReference>
<dbReference type="SMR" id="Q0TAC8"/>
<dbReference type="GeneID" id="93777962"/>
<dbReference type="KEGG" id="ecp:ECP_4145"/>
<dbReference type="HOGENOM" id="CLU_114306_4_3_6"/>
<dbReference type="Proteomes" id="UP000009182">
    <property type="component" value="Chromosome"/>
</dbReference>
<dbReference type="GO" id="GO:1990904">
    <property type="term" value="C:ribonucleoprotein complex"/>
    <property type="evidence" value="ECO:0007669"/>
    <property type="project" value="UniProtKB-KW"/>
</dbReference>
<dbReference type="GO" id="GO:0005840">
    <property type="term" value="C:ribosome"/>
    <property type="evidence" value="ECO:0007669"/>
    <property type="project" value="UniProtKB-KW"/>
</dbReference>
<dbReference type="GO" id="GO:0046872">
    <property type="term" value="F:metal ion binding"/>
    <property type="evidence" value="ECO:0007669"/>
    <property type="project" value="UniProtKB-KW"/>
</dbReference>
<dbReference type="GO" id="GO:0019843">
    <property type="term" value="F:rRNA binding"/>
    <property type="evidence" value="ECO:0007669"/>
    <property type="project" value="UniProtKB-KW"/>
</dbReference>
<dbReference type="GO" id="GO:0003735">
    <property type="term" value="F:structural constituent of ribosome"/>
    <property type="evidence" value="ECO:0007669"/>
    <property type="project" value="InterPro"/>
</dbReference>
<dbReference type="GO" id="GO:0006412">
    <property type="term" value="P:translation"/>
    <property type="evidence" value="ECO:0007669"/>
    <property type="project" value="UniProtKB-UniRule"/>
</dbReference>
<dbReference type="FunFam" id="4.10.830.30:FF:000001">
    <property type="entry name" value="50S ribosomal protein L31"/>
    <property type="match status" value="1"/>
</dbReference>
<dbReference type="Gene3D" id="4.10.830.30">
    <property type="entry name" value="Ribosomal protein L31"/>
    <property type="match status" value="1"/>
</dbReference>
<dbReference type="HAMAP" id="MF_00501">
    <property type="entry name" value="Ribosomal_bL31_1"/>
    <property type="match status" value="1"/>
</dbReference>
<dbReference type="InterPro" id="IPR034704">
    <property type="entry name" value="Ribosomal_bL28/bL31-like_sf"/>
</dbReference>
<dbReference type="InterPro" id="IPR002150">
    <property type="entry name" value="Ribosomal_bL31"/>
</dbReference>
<dbReference type="InterPro" id="IPR027491">
    <property type="entry name" value="Ribosomal_bL31_A"/>
</dbReference>
<dbReference type="InterPro" id="IPR042105">
    <property type="entry name" value="Ribosomal_bL31_sf"/>
</dbReference>
<dbReference type="NCBIfam" id="TIGR00105">
    <property type="entry name" value="L31"/>
    <property type="match status" value="1"/>
</dbReference>
<dbReference type="NCBIfam" id="NF000612">
    <property type="entry name" value="PRK00019.1"/>
    <property type="match status" value="1"/>
</dbReference>
<dbReference type="NCBIfam" id="NF001809">
    <property type="entry name" value="PRK00528.1"/>
    <property type="match status" value="1"/>
</dbReference>
<dbReference type="PANTHER" id="PTHR33280">
    <property type="entry name" value="50S RIBOSOMAL PROTEIN L31, CHLOROPLASTIC"/>
    <property type="match status" value="1"/>
</dbReference>
<dbReference type="PANTHER" id="PTHR33280:SF6">
    <property type="entry name" value="LARGE RIBOSOMAL SUBUNIT PROTEIN BL31A"/>
    <property type="match status" value="1"/>
</dbReference>
<dbReference type="Pfam" id="PF01197">
    <property type="entry name" value="Ribosomal_L31"/>
    <property type="match status" value="1"/>
</dbReference>
<dbReference type="PRINTS" id="PR01249">
    <property type="entry name" value="RIBOSOMALL31"/>
</dbReference>
<dbReference type="SUPFAM" id="SSF143800">
    <property type="entry name" value="L28p-like"/>
    <property type="match status" value="1"/>
</dbReference>
<dbReference type="PROSITE" id="PS01143">
    <property type="entry name" value="RIBOSOMAL_L31"/>
    <property type="match status" value="1"/>
</dbReference>
<proteinExistence type="inferred from homology"/>
<comment type="function">
    <text evidence="1">Binds the 23S rRNA.</text>
</comment>
<comment type="cofactor">
    <cofactor evidence="1">
        <name>Zn(2+)</name>
        <dbReference type="ChEBI" id="CHEBI:29105"/>
    </cofactor>
    <text evidence="1">Binds 1 zinc ion per subunit.</text>
</comment>
<comment type="subunit">
    <text evidence="1">Part of the 50S ribosomal subunit.</text>
</comment>
<comment type="similarity">
    <text evidence="1">Belongs to the bacterial ribosomal protein bL31 family. Type A subfamily.</text>
</comment>